<gene>
    <name evidence="1" type="primary">nadK</name>
    <name type="ordered locus">CLL_A2399</name>
</gene>
<comment type="function">
    <text evidence="1">Involved in the regulation of the intracellular balance of NAD and NADP, and is a key enzyme in the biosynthesis of NADP. Catalyzes specifically the phosphorylation on 2'-hydroxyl of the adenosine moiety of NAD to yield NADP.</text>
</comment>
<comment type="catalytic activity">
    <reaction evidence="1">
        <text>NAD(+) + ATP = ADP + NADP(+) + H(+)</text>
        <dbReference type="Rhea" id="RHEA:18629"/>
        <dbReference type="ChEBI" id="CHEBI:15378"/>
        <dbReference type="ChEBI" id="CHEBI:30616"/>
        <dbReference type="ChEBI" id="CHEBI:57540"/>
        <dbReference type="ChEBI" id="CHEBI:58349"/>
        <dbReference type="ChEBI" id="CHEBI:456216"/>
        <dbReference type="EC" id="2.7.1.23"/>
    </reaction>
</comment>
<comment type="cofactor">
    <cofactor evidence="1">
        <name>a divalent metal cation</name>
        <dbReference type="ChEBI" id="CHEBI:60240"/>
    </cofactor>
</comment>
<comment type="subcellular location">
    <subcellularLocation>
        <location evidence="1">Cytoplasm</location>
    </subcellularLocation>
</comment>
<comment type="similarity">
    <text evidence="1">Belongs to the NAD kinase family.</text>
</comment>
<keyword id="KW-0067">ATP-binding</keyword>
<keyword id="KW-0963">Cytoplasm</keyword>
<keyword id="KW-0418">Kinase</keyword>
<keyword id="KW-0520">NAD</keyword>
<keyword id="KW-0521">NADP</keyword>
<keyword id="KW-0547">Nucleotide-binding</keyword>
<keyword id="KW-0808">Transferase</keyword>
<protein>
    <recommendedName>
        <fullName evidence="1">NAD kinase</fullName>
        <ecNumber evidence="1">2.7.1.23</ecNumber>
    </recommendedName>
    <alternativeName>
        <fullName evidence="1">ATP-dependent NAD kinase</fullName>
    </alternativeName>
</protein>
<accession>B2TRM3</accession>
<organism>
    <name type="scientific">Clostridium botulinum (strain Eklund 17B / Type B)</name>
    <dbReference type="NCBI Taxonomy" id="935198"/>
    <lineage>
        <taxon>Bacteria</taxon>
        <taxon>Bacillati</taxon>
        <taxon>Bacillota</taxon>
        <taxon>Clostridia</taxon>
        <taxon>Eubacteriales</taxon>
        <taxon>Clostridiaceae</taxon>
        <taxon>Clostridium</taxon>
    </lineage>
</organism>
<dbReference type="EC" id="2.7.1.23" evidence="1"/>
<dbReference type="EMBL" id="CP001056">
    <property type="protein sequence ID" value="ACD23190.1"/>
    <property type="molecule type" value="Genomic_DNA"/>
</dbReference>
<dbReference type="SMR" id="B2TRM3"/>
<dbReference type="KEGG" id="cbk:CLL_A2399"/>
<dbReference type="PATRIC" id="fig|935198.13.peg.2357"/>
<dbReference type="HOGENOM" id="CLU_008831_0_1_9"/>
<dbReference type="Proteomes" id="UP000001195">
    <property type="component" value="Chromosome"/>
</dbReference>
<dbReference type="GO" id="GO:0005737">
    <property type="term" value="C:cytoplasm"/>
    <property type="evidence" value="ECO:0007669"/>
    <property type="project" value="UniProtKB-SubCell"/>
</dbReference>
<dbReference type="GO" id="GO:0005524">
    <property type="term" value="F:ATP binding"/>
    <property type="evidence" value="ECO:0007669"/>
    <property type="project" value="UniProtKB-KW"/>
</dbReference>
<dbReference type="GO" id="GO:0046872">
    <property type="term" value="F:metal ion binding"/>
    <property type="evidence" value="ECO:0007669"/>
    <property type="project" value="UniProtKB-UniRule"/>
</dbReference>
<dbReference type="GO" id="GO:0051287">
    <property type="term" value="F:NAD binding"/>
    <property type="evidence" value="ECO:0007669"/>
    <property type="project" value="UniProtKB-ARBA"/>
</dbReference>
<dbReference type="GO" id="GO:0003951">
    <property type="term" value="F:NAD+ kinase activity"/>
    <property type="evidence" value="ECO:0007669"/>
    <property type="project" value="UniProtKB-UniRule"/>
</dbReference>
<dbReference type="GO" id="GO:0019674">
    <property type="term" value="P:NAD metabolic process"/>
    <property type="evidence" value="ECO:0007669"/>
    <property type="project" value="InterPro"/>
</dbReference>
<dbReference type="GO" id="GO:0006741">
    <property type="term" value="P:NADP biosynthetic process"/>
    <property type="evidence" value="ECO:0007669"/>
    <property type="project" value="UniProtKB-UniRule"/>
</dbReference>
<dbReference type="Gene3D" id="3.40.50.10330">
    <property type="entry name" value="Probable inorganic polyphosphate/atp-NAD kinase, domain 1"/>
    <property type="match status" value="1"/>
</dbReference>
<dbReference type="Gene3D" id="2.60.200.30">
    <property type="entry name" value="Probable inorganic polyphosphate/atp-NAD kinase, domain 2"/>
    <property type="match status" value="1"/>
</dbReference>
<dbReference type="HAMAP" id="MF_00361">
    <property type="entry name" value="NAD_kinase"/>
    <property type="match status" value="1"/>
</dbReference>
<dbReference type="InterPro" id="IPR017438">
    <property type="entry name" value="ATP-NAD_kinase_N"/>
</dbReference>
<dbReference type="InterPro" id="IPR017437">
    <property type="entry name" value="ATP-NAD_kinase_PpnK-typ_C"/>
</dbReference>
<dbReference type="InterPro" id="IPR016064">
    <property type="entry name" value="NAD/diacylglycerol_kinase_sf"/>
</dbReference>
<dbReference type="InterPro" id="IPR002504">
    <property type="entry name" value="NADK"/>
</dbReference>
<dbReference type="PANTHER" id="PTHR20275">
    <property type="entry name" value="NAD KINASE"/>
    <property type="match status" value="1"/>
</dbReference>
<dbReference type="PANTHER" id="PTHR20275:SF0">
    <property type="entry name" value="NAD KINASE"/>
    <property type="match status" value="1"/>
</dbReference>
<dbReference type="Pfam" id="PF01513">
    <property type="entry name" value="NAD_kinase"/>
    <property type="match status" value="1"/>
</dbReference>
<dbReference type="Pfam" id="PF20143">
    <property type="entry name" value="NAD_kinase_C"/>
    <property type="match status" value="1"/>
</dbReference>
<dbReference type="SUPFAM" id="SSF111331">
    <property type="entry name" value="NAD kinase/diacylglycerol kinase-like"/>
    <property type="match status" value="1"/>
</dbReference>
<sequence length="284" mass="31402">MKNIGIAINPSKDYKNTILNMVKEKIKNICNITDIEVYNSFDIKNLNLSSLDLLIVLGGDGTLLGVARELDDDFKAPILGINIGNLGVLSSIEISDLELALKKLMTKDCKVHKRMMLNCEVDINESIKNIKALNEVAVARGTLSRMVKFKIFVDEKLYAIFKGDGLIVSTPTGSTAYSFSAGGPFICPDLEVISIVPICDHTKSMHPIVLKGDSTIKIIAQNGGDQIYLTIDGQRAIEMKDNSVITVKKNPKSLKLLLFNDYDYFKVIRNKVLNNSKECDGEKN</sequence>
<name>NADK_CLOBB</name>
<feature type="chain" id="PRO_1000120845" description="NAD kinase">
    <location>
        <begin position="1"/>
        <end position="284"/>
    </location>
</feature>
<feature type="active site" description="Proton acceptor" evidence="1">
    <location>
        <position position="60"/>
    </location>
</feature>
<feature type="binding site" evidence="1">
    <location>
        <begin position="60"/>
        <end position="61"/>
    </location>
    <ligand>
        <name>NAD(+)</name>
        <dbReference type="ChEBI" id="CHEBI:57540"/>
    </ligand>
</feature>
<feature type="binding site" evidence="1">
    <location>
        <begin position="134"/>
        <end position="135"/>
    </location>
    <ligand>
        <name>NAD(+)</name>
        <dbReference type="ChEBI" id="CHEBI:57540"/>
    </ligand>
</feature>
<feature type="binding site" evidence="1">
    <location>
        <position position="145"/>
    </location>
    <ligand>
        <name>NAD(+)</name>
        <dbReference type="ChEBI" id="CHEBI:57540"/>
    </ligand>
</feature>
<feature type="binding site" evidence="1">
    <location>
        <position position="162"/>
    </location>
    <ligand>
        <name>NAD(+)</name>
        <dbReference type="ChEBI" id="CHEBI:57540"/>
    </ligand>
</feature>
<feature type="binding site" evidence="1">
    <location>
        <position position="164"/>
    </location>
    <ligand>
        <name>NAD(+)</name>
        <dbReference type="ChEBI" id="CHEBI:57540"/>
    </ligand>
</feature>
<feature type="binding site" evidence="1">
    <location>
        <begin position="175"/>
        <end position="180"/>
    </location>
    <ligand>
        <name>NAD(+)</name>
        <dbReference type="ChEBI" id="CHEBI:57540"/>
    </ligand>
</feature>
<feature type="binding site" evidence="1">
    <location>
        <position position="234"/>
    </location>
    <ligand>
        <name>NAD(+)</name>
        <dbReference type="ChEBI" id="CHEBI:57540"/>
    </ligand>
</feature>
<proteinExistence type="inferred from homology"/>
<reference key="1">
    <citation type="submission" date="2008-04" db="EMBL/GenBank/DDBJ databases">
        <title>Complete sequence of Clostridium botulinum strain Eklund.</title>
        <authorList>
            <person name="Brinkac L.M."/>
            <person name="Brown J.L."/>
            <person name="Bruce D."/>
            <person name="Detter C."/>
            <person name="Munk C."/>
            <person name="Smith L.A."/>
            <person name="Smith T.J."/>
            <person name="Sutton G."/>
            <person name="Brettin T.S."/>
        </authorList>
    </citation>
    <scope>NUCLEOTIDE SEQUENCE [LARGE SCALE GENOMIC DNA]</scope>
    <source>
        <strain>Eklund 17B / Type B</strain>
    </source>
</reference>
<evidence type="ECO:0000255" key="1">
    <source>
        <dbReference type="HAMAP-Rule" id="MF_00361"/>
    </source>
</evidence>